<organism>
    <name type="scientific">Saccharomyces cerevisiae (strain ATCC 204508 / S288c)</name>
    <name type="common">Baker's yeast</name>
    <dbReference type="NCBI Taxonomy" id="559292"/>
    <lineage>
        <taxon>Eukaryota</taxon>
        <taxon>Fungi</taxon>
        <taxon>Dikarya</taxon>
        <taxon>Ascomycota</taxon>
        <taxon>Saccharomycotina</taxon>
        <taxon>Saccharomycetes</taxon>
        <taxon>Saccharomycetales</taxon>
        <taxon>Saccharomycetaceae</taxon>
        <taxon>Saccharomyces</taxon>
    </lineage>
</organism>
<keyword id="KW-0067">ATP-binding</keyword>
<keyword id="KW-0325">Glycoprotein</keyword>
<keyword id="KW-0472">Membrane</keyword>
<keyword id="KW-0547">Nucleotide-binding</keyword>
<keyword id="KW-1185">Reference proteome</keyword>
<keyword id="KW-0677">Repeat</keyword>
<keyword id="KW-0812">Transmembrane</keyword>
<keyword id="KW-1133">Transmembrane helix</keyword>
<keyword id="KW-0813">Transport</keyword>
<dbReference type="EMBL" id="Z71685">
    <property type="protein sequence ID" value="CAA96352.1"/>
    <property type="molecule type" value="Genomic_DNA"/>
</dbReference>
<dbReference type="EMBL" id="Z71686">
    <property type="protein sequence ID" value="CAA96354.1"/>
    <property type="molecule type" value="Genomic_DNA"/>
</dbReference>
<dbReference type="EMBL" id="BK006947">
    <property type="protein sequence ID" value="DAA10611.1"/>
    <property type="molecule type" value="Genomic_DNA"/>
</dbReference>
<dbReference type="PIR" id="S63403">
    <property type="entry name" value="S63403"/>
</dbReference>
<dbReference type="RefSeq" id="NP_014468.3">
    <property type="nucleotide sequence ID" value="NM_001183247.4"/>
</dbReference>
<dbReference type="SMR" id="P53756"/>
<dbReference type="BioGRID" id="35896">
    <property type="interactions" value="34"/>
</dbReference>
<dbReference type="DIP" id="DIP-7300N"/>
<dbReference type="FunCoup" id="P53756">
    <property type="interactions" value="226"/>
</dbReference>
<dbReference type="IntAct" id="P53756">
    <property type="interactions" value="6"/>
</dbReference>
<dbReference type="MINT" id="P53756"/>
<dbReference type="STRING" id="4932.YNR070W"/>
<dbReference type="TCDB" id="3.A.1.205.31">
    <property type="family name" value="the atp-binding cassette (abc) superfamily"/>
</dbReference>
<dbReference type="GlyCosmos" id="P53756">
    <property type="glycosylation" value="8 sites, No reported glycans"/>
</dbReference>
<dbReference type="GlyGen" id="P53756">
    <property type="glycosylation" value="8 sites"/>
</dbReference>
<dbReference type="iPTMnet" id="P53756"/>
<dbReference type="PaxDb" id="4932-YNR070W"/>
<dbReference type="PeptideAtlas" id="P53756"/>
<dbReference type="EnsemblFungi" id="YNR070W_mRNA">
    <property type="protein sequence ID" value="YNR070W"/>
    <property type="gene ID" value="YNR070W"/>
</dbReference>
<dbReference type="GeneID" id="855807"/>
<dbReference type="KEGG" id="sce:YNR070W"/>
<dbReference type="AGR" id="SGD:S000005353"/>
<dbReference type="SGD" id="S000005353">
    <property type="gene designation" value="PDR18"/>
</dbReference>
<dbReference type="VEuPathDB" id="FungiDB:YNR070W"/>
<dbReference type="eggNOG" id="KOG0065">
    <property type="taxonomic scope" value="Eukaryota"/>
</dbReference>
<dbReference type="GeneTree" id="ENSGT00940000176297"/>
<dbReference type="HOGENOM" id="CLU_000604_35_0_1"/>
<dbReference type="InParanoid" id="P53756"/>
<dbReference type="OMA" id="AFICYMI"/>
<dbReference type="OrthoDB" id="245989at2759"/>
<dbReference type="BioCyc" id="YEAST:G3O-33374-MONOMER"/>
<dbReference type="BioGRID-ORCS" id="855807">
    <property type="hits" value="0 hits in 10 CRISPR screens"/>
</dbReference>
<dbReference type="PRO" id="PR:P53756"/>
<dbReference type="Proteomes" id="UP000002311">
    <property type="component" value="Chromosome XIV"/>
</dbReference>
<dbReference type="RNAct" id="P53756">
    <property type="molecule type" value="protein"/>
</dbReference>
<dbReference type="GO" id="GO:0005829">
    <property type="term" value="C:cytosol"/>
    <property type="evidence" value="ECO:0007005"/>
    <property type="project" value="SGD"/>
</dbReference>
<dbReference type="GO" id="GO:0005739">
    <property type="term" value="C:mitochondrion"/>
    <property type="evidence" value="ECO:0007005"/>
    <property type="project" value="SGD"/>
</dbReference>
<dbReference type="GO" id="GO:0005886">
    <property type="term" value="C:plasma membrane"/>
    <property type="evidence" value="ECO:0000314"/>
    <property type="project" value="SGD"/>
</dbReference>
<dbReference type="GO" id="GO:0008559">
    <property type="term" value="F:ABC-type xenobiotic transporter activity"/>
    <property type="evidence" value="ECO:0000315"/>
    <property type="project" value="SGD"/>
</dbReference>
<dbReference type="GO" id="GO:0005524">
    <property type="term" value="F:ATP binding"/>
    <property type="evidence" value="ECO:0007669"/>
    <property type="project" value="UniProtKB-KW"/>
</dbReference>
<dbReference type="GO" id="GO:0016887">
    <property type="term" value="F:ATP hydrolysis activity"/>
    <property type="evidence" value="ECO:0007669"/>
    <property type="project" value="InterPro"/>
</dbReference>
<dbReference type="GO" id="GO:0071466">
    <property type="term" value="P:cellular response to xenobiotic stimulus"/>
    <property type="evidence" value="ECO:0000315"/>
    <property type="project" value="SGD"/>
</dbReference>
<dbReference type="GO" id="GO:0009410">
    <property type="term" value="P:response to xenobiotic stimulus"/>
    <property type="evidence" value="ECO:0000315"/>
    <property type="project" value="SGD"/>
</dbReference>
<dbReference type="GO" id="GO:0055092">
    <property type="term" value="P:sterol homeostasis"/>
    <property type="evidence" value="ECO:0000315"/>
    <property type="project" value="SGD"/>
</dbReference>
<dbReference type="CDD" id="cd03233">
    <property type="entry name" value="ABCG_PDR_domain1"/>
    <property type="match status" value="1"/>
</dbReference>
<dbReference type="CDD" id="cd03232">
    <property type="entry name" value="ABCG_PDR_domain2"/>
    <property type="match status" value="1"/>
</dbReference>
<dbReference type="FunFam" id="3.40.50.300:FF:000054">
    <property type="entry name" value="ABC multidrug transporter atrF"/>
    <property type="match status" value="1"/>
</dbReference>
<dbReference type="FunFam" id="3.40.50.300:FF:001460">
    <property type="entry name" value="ATP-binding cassette transporter"/>
    <property type="match status" value="1"/>
</dbReference>
<dbReference type="Gene3D" id="3.40.50.300">
    <property type="entry name" value="P-loop containing nucleotide triphosphate hydrolases"/>
    <property type="match status" value="2"/>
</dbReference>
<dbReference type="InterPro" id="IPR003593">
    <property type="entry name" value="AAA+_ATPase"/>
</dbReference>
<dbReference type="InterPro" id="IPR013525">
    <property type="entry name" value="ABC2_TM"/>
</dbReference>
<dbReference type="InterPro" id="IPR003439">
    <property type="entry name" value="ABC_transporter-like_ATP-bd"/>
</dbReference>
<dbReference type="InterPro" id="IPR017871">
    <property type="entry name" value="ABC_transporter-like_CS"/>
</dbReference>
<dbReference type="InterPro" id="IPR043926">
    <property type="entry name" value="ABCG_dom"/>
</dbReference>
<dbReference type="InterPro" id="IPR034001">
    <property type="entry name" value="ABCG_PDR_1"/>
</dbReference>
<dbReference type="InterPro" id="IPR034003">
    <property type="entry name" value="ABCG_PDR_2"/>
</dbReference>
<dbReference type="InterPro" id="IPR027417">
    <property type="entry name" value="P-loop_NTPase"/>
</dbReference>
<dbReference type="InterPro" id="IPR010929">
    <property type="entry name" value="PDR_CDR_ABC"/>
</dbReference>
<dbReference type="PANTHER" id="PTHR19241">
    <property type="entry name" value="ATP-BINDING CASSETTE TRANSPORTER"/>
    <property type="match status" value="1"/>
</dbReference>
<dbReference type="Pfam" id="PF01061">
    <property type="entry name" value="ABC2_membrane"/>
    <property type="match status" value="2"/>
</dbReference>
<dbReference type="Pfam" id="PF19055">
    <property type="entry name" value="ABC2_membrane_7"/>
    <property type="match status" value="1"/>
</dbReference>
<dbReference type="Pfam" id="PF00005">
    <property type="entry name" value="ABC_tran"/>
    <property type="match status" value="2"/>
</dbReference>
<dbReference type="Pfam" id="PF06422">
    <property type="entry name" value="PDR_CDR"/>
    <property type="match status" value="1"/>
</dbReference>
<dbReference type="SMART" id="SM00382">
    <property type="entry name" value="AAA"/>
    <property type="match status" value="2"/>
</dbReference>
<dbReference type="SUPFAM" id="SSF52540">
    <property type="entry name" value="P-loop containing nucleoside triphosphate hydrolases"/>
    <property type="match status" value="2"/>
</dbReference>
<dbReference type="PROSITE" id="PS00211">
    <property type="entry name" value="ABC_TRANSPORTER_1"/>
    <property type="match status" value="1"/>
</dbReference>
<dbReference type="PROSITE" id="PS50893">
    <property type="entry name" value="ABC_TRANSPORTER_2"/>
    <property type="match status" value="2"/>
</dbReference>
<gene>
    <name type="primary">PDR18</name>
    <name type="ordered locus">YNR070W</name>
    <name type="ORF">N3568</name>
</gene>
<evidence type="ECO:0000255" key="1"/>
<evidence type="ECO:0000255" key="2">
    <source>
        <dbReference type="PROSITE-ProRule" id="PRU00434"/>
    </source>
</evidence>
<evidence type="ECO:0000305" key="3"/>
<protein>
    <recommendedName>
        <fullName>ABC transporter ATP-binding protein/permease PDR18</fullName>
    </recommendedName>
    <alternativeName>
        <fullName>Pleiotropic drug resistance protein 18</fullName>
    </alternativeName>
</protein>
<reference key="1">
    <citation type="journal article" date="1997" name="Nature">
        <title>The nucleotide sequence of Saccharomyces cerevisiae chromosome XIV and its evolutionary implications.</title>
        <authorList>
            <person name="Philippsen P."/>
            <person name="Kleine K."/>
            <person name="Poehlmann R."/>
            <person name="Duesterhoeft A."/>
            <person name="Hamberg K."/>
            <person name="Hegemann J.H."/>
            <person name="Obermaier B."/>
            <person name="Urrestarazu L.A."/>
            <person name="Aert R."/>
            <person name="Albermann K."/>
            <person name="Altmann R."/>
            <person name="Andre B."/>
            <person name="Baladron V."/>
            <person name="Ballesta J.P.G."/>
            <person name="Becam A.-M."/>
            <person name="Beinhauer J.D."/>
            <person name="Boskovic J."/>
            <person name="Buitrago M.J."/>
            <person name="Bussereau F."/>
            <person name="Coster F."/>
            <person name="Crouzet M."/>
            <person name="D'Angelo M."/>
            <person name="Dal Pero F."/>
            <person name="De Antoni A."/>
            <person name="del Rey F."/>
            <person name="Doignon F."/>
            <person name="Domdey H."/>
            <person name="Dubois E."/>
            <person name="Fiedler T.A."/>
            <person name="Fleig U."/>
            <person name="Floeth M."/>
            <person name="Fritz C."/>
            <person name="Gaillardin C."/>
            <person name="Garcia-Cantalejo J.M."/>
            <person name="Glansdorff N."/>
            <person name="Goffeau A."/>
            <person name="Gueldener U."/>
            <person name="Herbert C.J."/>
            <person name="Heumann K."/>
            <person name="Heuss-Neitzel D."/>
            <person name="Hilbert H."/>
            <person name="Hinni K."/>
            <person name="Iraqui Houssaini I."/>
            <person name="Jacquet M."/>
            <person name="Jimenez A."/>
            <person name="Jonniaux J.-L."/>
            <person name="Karpfinger-Hartl L."/>
            <person name="Lanfranchi G."/>
            <person name="Lepingle A."/>
            <person name="Levesque H."/>
            <person name="Lyck R."/>
            <person name="Maftahi M."/>
            <person name="Mallet L."/>
            <person name="Maurer C.T.C."/>
            <person name="Messenguy F."/>
            <person name="Mewes H.-W."/>
            <person name="Moestl D."/>
            <person name="Nasr F."/>
            <person name="Nicaud J.-M."/>
            <person name="Niedenthal R.K."/>
            <person name="Pandolfo D."/>
            <person name="Pierard A."/>
            <person name="Piravandi E."/>
            <person name="Planta R.J."/>
            <person name="Pohl T.M."/>
            <person name="Purnelle B."/>
            <person name="Rebischung C."/>
            <person name="Remacha M.A."/>
            <person name="Revuelta J.L."/>
            <person name="Rinke M."/>
            <person name="Saiz J.E."/>
            <person name="Sartorello F."/>
            <person name="Scherens B."/>
            <person name="Sen-Gupta M."/>
            <person name="Soler-Mira A."/>
            <person name="Urbanus J.H.M."/>
            <person name="Valle G."/>
            <person name="Van Dyck L."/>
            <person name="Verhasselt P."/>
            <person name="Vierendeels F."/>
            <person name="Vissers S."/>
            <person name="Voet M."/>
            <person name="Volckaert G."/>
            <person name="Wach A."/>
            <person name="Wambutt R."/>
            <person name="Wedler H."/>
            <person name="Zollner A."/>
            <person name="Hani J."/>
        </authorList>
    </citation>
    <scope>NUCLEOTIDE SEQUENCE [LARGE SCALE GENOMIC DNA]</scope>
    <source>
        <strain>ATCC 204508 / S288c</strain>
    </source>
</reference>
<reference key="2">
    <citation type="journal article" date="2014" name="G3 (Bethesda)">
        <title>The reference genome sequence of Saccharomyces cerevisiae: Then and now.</title>
        <authorList>
            <person name="Engel S.R."/>
            <person name="Dietrich F.S."/>
            <person name="Fisk D.G."/>
            <person name="Binkley G."/>
            <person name="Balakrishnan R."/>
            <person name="Costanzo M.C."/>
            <person name="Dwight S.S."/>
            <person name="Hitz B.C."/>
            <person name="Karra K."/>
            <person name="Nash R.S."/>
            <person name="Weng S."/>
            <person name="Wong E.D."/>
            <person name="Lloyd P."/>
            <person name="Skrzypek M.S."/>
            <person name="Miyasato S.R."/>
            <person name="Simison M."/>
            <person name="Cherry J.M."/>
        </authorList>
    </citation>
    <scope>GENOME REANNOTATION</scope>
    <source>
        <strain>ATCC 204508 / S288c</strain>
    </source>
</reference>
<feature type="chain" id="PRO_0000093466" description="ABC transporter ATP-binding protein/permease PDR18">
    <location>
        <begin position="1"/>
        <end position="1333"/>
    </location>
</feature>
<feature type="transmembrane region" description="Helical" evidence="1">
    <location>
        <begin position="13"/>
        <end position="33"/>
    </location>
</feature>
<feature type="transmembrane region" description="Helical" evidence="1">
    <location>
        <begin position="392"/>
        <end position="412"/>
    </location>
</feature>
<feature type="transmembrane region" description="Helical" evidence="1">
    <location>
        <begin position="425"/>
        <end position="445"/>
    </location>
</feature>
<feature type="transmembrane region" description="Helical" evidence="1">
    <location>
        <begin position="474"/>
        <end position="494"/>
    </location>
</feature>
<feature type="transmembrane region" description="Helical" evidence="1">
    <location>
        <begin position="499"/>
        <end position="519"/>
    </location>
</feature>
<feature type="transmembrane region" description="Helical" evidence="1">
    <location>
        <begin position="534"/>
        <end position="554"/>
    </location>
</feature>
<feature type="transmembrane region" description="Helical" evidence="1">
    <location>
        <begin position="642"/>
        <end position="662"/>
    </location>
</feature>
<feature type="transmembrane region" description="Helical" evidence="1">
    <location>
        <begin position="1071"/>
        <end position="1091"/>
    </location>
</feature>
<feature type="transmembrane region" description="Helical" evidence="1">
    <location>
        <begin position="1092"/>
        <end position="1112"/>
    </location>
</feature>
<feature type="transmembrane region" description="Helical" evidence="1">
    <location>
        <begin position="1150"/>
        <end position="1170"/>
    </location>
</feature>
<feature type="transmembrane region" description="Helical" evidence="1">
    <location>
        <begin position="1178"/>
        <end position="1198"/>
    </location>
</feature>
<feature type="transmembrane region" description="Helical" evidence="1">
    <location>
        <begin position="1210"/>
        <end position="1230"/>
    </location>
</feature>
<feature type="transmembrane region" description="Helical" evidence="1">
    <location>
        <begin position="1235"/>
        <end position="1255"/>
    </location>
</feature>
<feature type="domain" description="ABC transporter 1" evidence="2">
    <location>
        <begin position="30"/>
        <end position="281"/>
    </location>
</feature>
<feature type="domain" description="ABC transporter 2" evidence="2">
    <location>
        <begin position="729"/>
        <end position="971"/>
    </location>
</feature>
<feature type="binding site" evidence="2">
    <location>
        <begin position="765"/>
        <end position="772"/>
    </location>
    <ligand>
        <name>ATP</name>
        <dbReference type="ChEBI" id="CHEBI:30616"/>
    </ligand>
</feature>
<feature type="glycosylation site" description="N-linked (GlcNAc...) asparagine" evidence="1">
    <location>
        <position position="48"/>
    </location>
</feature>
<feature type="glycosylation site" description="N-linked (GlcNAc...) asparagine" evidence="1">
    <location>
        <position position="144"/>
    </location>
</feature>
<feature type="glycosylation site" description="N-linked (GlcNAc...) asparagine" evidence="1">
    <location>
        <position position="205"/>
    </location>
</feature>
<feature type="glycosylation site" description="N-linked (GlcNAc...) asparagine" evidence="1">
    <location>
        <position position="350"/>
    </location>
</feature>
<feature type="glycosylation site" description="N-linked (GlcNAc...) asparagine" evidence="1">
    <location>
        <position position="697"/>
    </location>
</feature>
<feature type="glycosylation site" description="N-linked (GlcNAc...) asparagine" evidence="1">
    <location>
        <position position="733"/>
    </location>
</feature>
<feature type="glycosylation site" description="N-linked (GlcNAc...) asparagine" evidence="1">
    <location>
        <position position="958"/>
    </location>
</feature>
<feature type="glycosylation site" description="N-linked (GlcNAc...) asparagine" evidence="1">
    <location>
        <position position="1320"/>
    </location>
</feature>
<name>PDR18_YEAST</name>
<accession>P53756</accession>
<accession>D6W1P5</accession>
<comment type="interaction">
    <interactant intactId="EBI-28581">
        <id>P53756</id>
    </interactant>
    <interactant intactId="EBI-3681488">
        <id>P40219</id>
        <label>LDO16</label>
    </interactant>
    <organismsDiffer>false</organismsDiffer>
    <experiments>2</experiments>
</comment>
<comment type="interaction">
    <interactant intactId="EBI-28581">
        <id>P53756</id>
    </interactant>
    <interactant intactId="EBI-29667">
        <id>P20107</id>
        <label>ZRC1</label>
    </interactant>
    <organismsDiffer>false</organismsDiffer>
    <experiments>2</experiments>
</comment>
<comment type="subcellular location">
    <subcellularLocation>
        <location evidence="3">Membrane</location>
        <topology evidence="3">Multi-pass membrane protein</topology>
    </subcellularLocation>
</comment>
<comment type="similarity">
    <text evidence="3">Belongs to the ABC transporter superfamily. ABCG family. PDR (TC 3.A.1.205) subfamily.</text>
</comment>
<proteinExistence type="evidence at protein level"/>
<sequence length="1333" mass="149750">MECVSVEGLDSSFLEGQTFGDILCLPWTIIKGIRERKNRNKMKIILKNVSLLAKSGEMVLVLGRPGAGCTSFLKSAAGETSQFAGGVTTGHISYDGIPQKEMMQHYKPDVIYNGEQDVHFPHLTVKQTLDFAISCKMPAKRVNNVTKEEYITANREFYAKIFGLTHTFDTKVGNDFISGVSGGERKRVSIAEALAAKGSIYCWDNATRGLDSSTALEFARAIRTMTNLLGTTALVTVYQASENIYETFDKVTVLYAGRQIFCGKTTEAKDYFENMGYLCPPRQSTAEYLTAITDPNGLHEIKPGFEYQVPHTADEFEKYWLDSPEYARLKGEIQKYKHEVNTEWTKKTYNESMAQEKSKGTRKKSYYTVSYWEQIRLCTIRGFLRIYGDKSYTVINTCAAIAQAFITGSLFYQAPSSTLGAFSRSGVLFFSLLYYSLMGLANISFEHRPILQKHKVYSLYHPSAEALASTISSFPFRMIGLTFFIIILYFLAGLHRSAGAFFTMYLLLTMCSEAITSLFQMVSSLCDTLSQANSIAGVVMLSIAMYSTYMIQLPSMHPWFKWISYILPIRYAFESMLNAEFHGRHMDCGGTLVPSGPGFENILPENQVCAFVGSRPGQSWVLGDDYLRAQYQYEYKNTWRNFGIMWCFLIGYIVLRAVFTEYKSPVKSGGDALVVKKGTKNAIQRSWSSKNDEENLNASIATQDMKEIASSNDDSTSADFEGLESTGVFIWKNVSFTIPHSSGQRKLLDSVSGYCVPGTLTALIGESGAGKTTLLNTLAQRNVGTITGDMLVDGLPMDASFKRRTGYVQQQDLHVAELTVKESLQFSARMRRPQSIPDAEKMEYVEKIISILEMQEFSEALVGEIGYGLNVEQRKKLSIGVELVGKPDLLLFLDEPTSGLDSQSAWAVVKMLKRLALAGQSILCTIHQPSATLFEQFDRLLLLGKGGQTIYFGEIGKNSSSVIKYFEKNGARKCQQNENPAEYILEAIGAGATASVQQNWPDIWQKSHEYANINEKINDMIKDLSSTTLHKTATRASKYATSYSYQFHHVLKRSSLTFWRNLNYIMAKMMLLMISGLFIGFTFFHVGVNAIGLQNSLFACFMAIVISAPATNQIQERATVAKELYEVRESKSNMFHWSLLLITHYLNELPYHLLFSTIFFVSSYFPLGVFTEASRSSVFYLNYAILFQLYYIGLALMILYMSPNLQSANVIVGFILSFLLSFCGAVQPASLMPGFWTFMWKLSPYTYFLQNLVGLLMHDKPVRCSKKELSLFNPPVGQTCGEFTKPFFEFGTGYIANPDATADCAYCQYKVGDEYLARINASFSYLWRNFGFI</sequence>